<name>CYB_CAICR</name>
<geneLocation type="mitochondrion"/>
<proteinExistence type="inferred from homology"/>
<protein>
    <recommendedName>
        <fullName>Cytochrome b</fullName>
    </recommendedName>
    <alternativeName>
        <fullName>Complex III subunit 3</fullName>
    </alternativeName>
    <alternativeName>
        <fullName>Complex III subunit III</fullName>
    </alternativeName>
    <alternativeName>
        <fullName>Cytochrome b-c1 complex subunit 3</fullName>
    </alternativeName>
    <alternativeName>
        <fullName>Ubiquinol-cytochrome-c reductase complex cytochrome b subunit</fullName>
    </alternativeName>
</protein>
<evidence type="ECO:0000250" key="1"/>
<evidence type="ECO:0000250" key="2">
    <source>
        <dbReference type="UniProtKB" id="P00157"/>
    </source>
</evidence>
<evidence type="ECO:0000255" key="3">
    <source>
        <dbReference type="PROSITE-ProRule" id="PRU00967"/>
    </source>
</evidence>
<evidence type="ECO:0000255" key="4">
    <source>
        <dbReference type="PROSITE-ProRule" id="PRU00968"/>
    </source>
</evidence>
<sequence length="383" mass="43070">MTHQLRKSHPLLKLVNHSLIDLPTPSNISTWWNFGSLLGLTLMIQILTGVFLMMHFSPSDTTAFSSVAYTSREVWFGWLIRSFHTNGASIFFMFIFLHIGRGLYYASYLHENTWNVGVIMLFLLMATAFMGYVLPWGQMSFWGAAVITNLLSAIPYIGDTIVPWIWGGPSVNNATLTRFTALHFLLPFIILALLITHLIFLHERGSFNPAGLSKNTDKIPFHPYYTMKDVLGAVLAASMLLTLALYLPALLGDPENFTPANPMATPSHIKPEWYFLFAYAILRSIPNKLGGVLAMFSSIFILLLIPFLHTTTQQPMSLRPLSQLLFWTLILNFLALTWIGGKPVNSPYILLGQITSLLYFITILILMPLLGALENKTTKPPFI</sequence>
<organism>
    <name type="scientific">Caiman crocodilus</name>
    <name type="common">Spectacled caiman</name>
    <name type="synonym">Caiman sclerops</name>
    <dbReference type="NCBI Taxonomy" id="8499"/>
    <lineage>
        <taxon>Eukaryota</taxon>
        <taxon>Metazoa</taxon>
        <taxon>Chordata</taxon>
        <taxon>Craniata</taxon>
        <taxon>Vertebrata</taxon>
        <taxon>Euteleostomi</taxon>
        <taxon>Archelosauria</taxon>
        <taxon>Archosauria</taxon>
        <taxon>Crocodylia</taxon>
        <taxon>Alligatoridae</taxon>
        <taxon>Caimaninae</taxon>
        <taxon>Caiman</taxon>
    </lineage>
</organism>
<gene>
    <name type="primary">MT-CYB</name>
    <name type="synonym">COB</name>
    <name type="synonym">CYTB</name>
    <name type="synonym">MTCYB</name>
</gene>
<reference key="1">
    <citation type="journal article" date="2001" name="Proc. R. Soc. B">
        <title>The mitochondrial genomes of the iguana (Iguana iguana) and the caiman (Caiman crocodylus): implications for amniote phylogeny.</title>
        <authorList>
            <person name="Janke A."/>
            <person name="Erpenbeck D."/>
            <person name="Nilsson M."/>
            <person name="Arnason U."/>
        </authorList>
    </citation>
    <scope>NUCLEOTIDE SEQUENCE [GENOMIC DNA]</scope>
    <source>
        <tissue>Liver</tissue>
    </source>
</reference>
<keyword id="KW-0249">Electron transport</keyword>
<keyword id="KW-0349">Heme</keyword>
<keyword id="KW-0408">Iron</keyword>
<keyword id="KW-0472">Membrane</keyword>
<keyword id="KW-0479">Metal-binding</keyword>
<keyword id="KW-0496">Mitochondrion</keyword>
<keyword id="KW-0999">Mitochondrion inner membrane</keyword>
<keyword id="KW-0679">Respiratory chain</keyword>
<keyword id="KW-0812">Transmembrane</keyword>
<keyword id="KW-1133">Transmembrane helix</keyword>
<keyword id="KW-0813">Transport</keyword>
<keyword id="KW-0830">Ubiquinone</keyword>
<accession>Q9B205</accession>
<dbReference type="EMBL" id="AJ404872">
    <property type="protein sequence ID" value="CAC36953.1"/>
    <property type="molecule type" value="Genomic_DNA"/>
</dbReference>
<dbReference type="RefSeq" id="NP_112532.1">
    <property type="nucleotide sequence ID" value="NC_002744.2"/>
</dbReference>
<dbReference type="SMR" id="Q9B205"/>
<dbReference type="GeneID" id="803329"/>
<dbReference type="CTD" id="4519"/>
<dbReference type="GO" id="GO:0005743">
    <property type="term" value="C:mitochondrial inner membrane"/>
    <property type="evidence" value="ECO:0007669"/>
    <property type="project" value="UniProtKB-SubCell"/>
</dbReference>
<dbReference type="GO" id="GO:0045275">
    <property type="term" value="C:respiratory chain complex III"/>
    <property type="evidence" value="ECO:0007669"/>
    <property type="project" value="InterPro"/>
</dbReference>
<dbReference type="GO" id="GO:0046872">
    <property type="term" value="F:metal ion binding"/>
    <property type="evidence" value="ECO:0007669"/>
    <property type="project" value="UniProtKB-KW"/>
</dbReference>
<dbReference type="GO" id="GO:0008121">
    <property type="term" value="F:ubiquinol-cytochrome-c reductase activity"/>
    <property type="evidence" value="ECO:0007669"/>
    <property type="project" value="InterPro"/>
</dbReference>
<dbReference type="GO" id="GO:0006122">
    <property type="term" value="P:mitochondrial electron transport, ubiquinol to cytochrome c"/>
    <property type="evidence" value="ECO:0007669"/>
    <property type="project" value="TreeGrafter"/>
</dbReference>
<dbReference type="CDD" id="cd00290">
    <property type="entry name" value="cytochrome_b_C"/>
    <property type="match status" value="1"/>
</dbReference>
<dbReference type="CDD" id="cd00284">
    <property type="entry name" value="Cytochrome_b_N"/>
    <property type="match status" value="1"/>
</dbReference>
<dbReference type="FunFam" id="1.20.810.10:FF:000002">
    <property type="entry name" value="Cytochrome b"/>
    <property type="match status" value="1"/>
</dbReference>
<dbReference type="Gene3D" id="1.20.810.10">
    <property type="entry name" value="Cytochrome Bc1 Complex, Chain C"/>
    <property type="match status" value="1"/>
</dbReference>
<dbReference type="InterPro" id="IPR005798">
    <property type="entry name" value="Cyt_b/b6_C"/>
</dbReference>
<dbReference type="InterPro" id="IPR036150">
    <property type="entry name" value="Cyt_b/b6_C_sf"/>
</dbReference>
<dbReference type="InterPro" id="IPR005797">
    <property type="entry name" value="Cyt_b/b6_N"/>
</dbReference>
<dbReference type="InterPro" id="IPR027387">
    <property type="entry name" value="Cytb/b6-like_sf"/>
</dbReference>
<dbReference type="InterPro" id="IPR030689">
    <property type="entry name" value="Cytochrome_b"/>
</dbReference>
<dbReference type="InterPro" id="IPR048260">
    <property type="entry name" value="Cytochrome_b_C_euk/bac"/>
</dbReference>
<dbReference type="InterPro" id="IPR048259">
    <property type="entry name" value="Cytochrome_b_N_euk/bac"/>
</dbReference>
<dbReference type="InterPro" id="IPR016174">
    <property type="entry name" value="Di-haem_cyt_TM"/>
</dbReference>
<dbReference type="PANTHER" id="PTHR19271">
    <property type="entry name" value="CYTOCHROME B"/>
    <property type="match status" value="1"/>
</dbReference>
<dbReference type="PANTHER" id="PTHR19271:SF16">
    <property type="entry name" value="CYTOCHROME B"/>
    <property type="match status" value="1"/>
</dbReference>
<dbReference type="Pfam" id="PF00032">
    <property type="entry name" value="Cytochrom_B_C"/>
    <property type="match status" value="1"/>
</dbReference>
<dbReference type="Pfam" id="PF00033">
    <property type="entry name" value="Cytochrome_B"/>
    <property type="match status" value="1"/>
</dbReference>
<dbReference type="PIRSF" id="PIRSF038885">
    <property type="entry name" value="COB"/>
    <property type="match status" value="1"/>
</dbReference>
<dbReference type="SUPFAM" id="SSF81648">
    <property type="entry name" value="a domain/subunit of cytochrome bc1 complex (Ubiquinol-cytochrome c reductase)"/>
    <property type="match status" value="1"/>
</dbReference>
<dbReference type="SUPFAM" id="SSF81342">
    <property type="entry name" value="Transmembrane di-heme cytochromes"/>
    <property type="match status" value="1"/>
</dbReference>
<dbReference type="PROSITE" id="PS51003">
    <property type="entry name" value="CYTB_CTER"/>
    <property type="match status" value="1"/>
</dbReference>
<dbReference type="PROSITE" id="PS51002">
    <property type="entry name" value="CYTB_NTER"/>
    <property type="match status" value="1"/>
</dbReference>
<feature type="chain" id="PRO_0000060705" description="Cytochrome b">
    <location>
        <begin position="1"/>
        <end position="383"/>
    </location>
</feature>
<feature type="transmembrane region" description="Helical" evidence="2">
    <location>
        <begin position="34"/>
        <end position="54"/>
    </location>
</feature>
<feature type="transmembrane region" description="Helical" evidence="2">
    <location>
        <begin position="78"/>
        <end position="99"/>
    </location>
</feature>
<feature type="transmembrane region" description="Helical" evidence="2">
    <location>
        <begin position="114"/>
        <end position="134"/>
    </location>
</feature>
<feature type="transmembrane region" description="Helical" evidence="2">
    <location>
        <begin position="179"/>
        <end position="199"/>
    </location>
</feature>
<feature type="transmembrane region" description="Helical" evidence="2">
    <location>
        <begin position="227"/>
        <end position="247"/>
    </location>
</feature>
<feature type="transmembrane region" description="Helical" evidence="2">
    <location>
        <begin position="289"/>
        <end position="309"/>
    </location>
</feature>
<feature type="transmembrane region" description="Helical" evidence="2">
    <location>
        <begin position="321"/>
        <end position="341"/>
    </location>
</feature>
<feature type="transmembrane region" description="Helical" evidence="2">
    <location>
        <begin position="348"/>
        <end position="368"/>
    </location>
</feature>
<feature type="binding site" description="axial binding residue" evidence="2">
    <location>
        <position position="84"/>
    </location>
    <ligand>
        <name>heme b</name>
        <dbReference type="ChEBI" id="CHEBI:60344"/>
        <label>b562</label>
    </ligand>
    <ligandPart>
        <name>Fe</name>
        <dbReference type="ChEBI" id="CHEBI:18248"/>
    </ligandPart>
</feature>
<feature type="binding site" description="axial binding residue" evidence="2">
    <location>
        <position position="98"/>
    </location>
    <ligand>
        <name>heme b</name>
        <dbReference type="ChEBI" id="CHEBI:60344"/>
        <label>b566</label>
    </ligand>
    <ligandPart>
        <name>Fe</name>
        <dbReference type="ChEBI" id="CHEBI:18248"/>
    </ligandPart>
</feature>
<feature type="binding site" description="axial binding residue" evidence="2">
    <location>
        <position position="183"/>
    </location>
    <ligand>
        <name>heme b</name>
        <dbReference type="ChEBI" id="CHEBI:60344"/>
        <label>b562</label>
    </ligand>
    <ligandPart>
        <name>Fe</name>
        <dbReference type="ChEBI" id="CHEBI:18248"/>
    </ligandPart>
</feature>
<feature type="binding site" description="axial binding residue" evidence="2">
    <location>
        <position position="197"/>
    </location>
    <ligand>
        <name>heme b</name>
        <dbReference type="ChEBI" id="CHEBI:60344"/>
        <label>b566</label>
    </ligand>
    <ligandPart>
        <name>Fe</name>
        <dbReference type="ChEBI" id="CHEBI:18248"/>
    </ligandPart>
</feature>
<feature type="binding site" evidence="2">
    <location>
        <position position="202"/>
    </location>
    <ligand>
        <name>a ubiquinone</name>
        <dbReference type="ChEBI" id="CHEBI:16389"/>
    </ligand>
</feature>
<comment type="function">
    <text evidence="2">Component of the ubiquinol-cytochrome c reductase complex (complex III or cytochrome b-c1 complex) that is part of the mitochondrial respiratory chain. The b-c1 complex mediates electron transfer from ubiquinol to cytochrome c. Contributes to the generation of a proton gradient across the mitochondrial membrane that is then used for ATP synthesis.</text>
</comment>
<comment type="cofactor">
    <cofactor evidence="2">
        <name>heme b</name>
        <dbReference type="ChEBI" id="CHEBI:60344"/>
    </cofactor>
    <text evidence="2">Binds 2 heme b groups non-covalently.</text>
</comment>
<comment type="subunit">
    <text evidence="2">The cytochrome bc1 complex contains 3 respiratory subunits (MT-CYB, CYC1 and UQCRFS1), 2 core proteins (UQCRC1 and UQCRC2) and probably 6 low-molecular weight proteins.</text>
</comment>
<comment type="subcellular location">
    <subcellularLocation>
        <location evidence="2">Mitochondrion inner membrane</location>
        <topology evidence="2">Multi-pass membrane protein</topology>
    </subcellularLocation>
</comment>
<comment type="miscellaneous">
    <text evidence="1">Heme 1 (or BL or b562) is low-potential and absorbs at about 562 nm, and heme 2 (or BH or b566) is high-potential and absorbs at about 566 nm.</text>
</comment>
<comment type="similarity">
    <text evidence="3 4">Belongs to the cytochrome b family.</text>
</comment>
<comment type="caution">
    <text evidence="2">The full-length protein contains only eight transmembrane helices, not nine as predicted by bioinformatics tools.</text>
</comment>